<accession>P73962</accession>
<proteinExistence type="inferred from homology"/>
<organism>
    <name type="scientific">Synechocystis sp. (strain ATCC 27184 / PCC 6803 / Kazusa)</name>
    <dbReference type="NCBI Taxonomy" id="1111708"/>
    <lineage>
        <taxon>Bacteria</taxon>
        <taxon>Bacillati</taxon>
        <taxon>Cyanobacteriota</taxon>
        <taxon>Cyanophyceae</taxon>
        <taxon>Synechococcales</taxon>
        <taxon>Merismopediaceae</taxon>
        <taxon>Synechocystis</taxon>
    </lineage>
</organism>
<comment type="function">
    <text evidence="1 5">Involved in the synthesis of phylloquinone (vitamin K1). Catalyzes the transfer of a prenyl chain to 2-carboxy-1,4-naphthoquinone.</text>
</comment>
<comment type="catalytic activity">
    <reaction evidence="1 5">
        <text>2-carboxy-1,4-naphthoquinone + phytyl diphosphate + H(+) = demethylphylloquinone + CO2 + diphosphate</text>
        <dbReference type="Rhea" id="RHEA:47740"/>
        <dbReference type="ChEBI" id="CHEBI:15378"/>
        <dbReference type="ChEBI" id="CHEBI:16526"/>
        <dbReference type="ChEBI" id="CHEBI:31087"/>
        <dbReference type="ChEBI" id="CHEBI:33019"/>
        <dbReference type="ChEBI" id="CHEBI:75434"/>
        <dbReference type="ChEBI" id="CHEBI:87842"/>
        <dbReference type="EC" id="2.5.1.130"/>
    </reaction>
</comment>
<comment type="pathway">
    <text evidence="1 2">Cofactor biosynthesis; phylloquinone biosynthesis.</text>
</comment>
<comment type="subcellular location">
    <subcellularLocation>
        <location evidence="1 4">Cell inner membrane</location>
        <topology evidence="1 4">Multi-pass membrane protein</topology>
    </subcellularLocation>
</comment>
<comment type="disruption phenotype">
    <text evidence="2">Mutants grow photoautotrophically under low light conditions, with doubling times twice that of the wild type, but they are unable to grow under high light conditions. Mutants contain less photosystem I (PSI) than the wild-type cells, and membranes do not contain detectable levels of phylloquinone.</text>
</comment>
<comment type="similarity">
    <text evidence="1 4">Belongs to the MenA family. Type 2 subfamily.</text>
</comment>
<sequence length="307" mass="33247">MTESSPLAPSTAPATRKLWLAAIKPPMYTVAVVPITVGSAVAYGLTGQWHGDVFTIFLLSAIAIIAWINLSNDVFDSDTGIDVRKAHSVVNLTGNRNLVFLISNFFLLAGVLGLMSMSWRAQDWTVLELIGVAIFLGYTYQGPPFRLGYLGLGELICLITFGPLAIAAAYYSQSQSFSWNLLTPSVFVGISTAIILFCSHFHQVEDDLAAGKKSPIVRLGTKLGSQVLTLSVVSLYLITAIGVLCHQAPWQTLLIIASLPWAVQLIRHVGQYHDQPEQVSNCKFIAVNLHFFSGMLMAAGYGWAGLG</sequence>
<name>MENA_SYNY3</name>
<evidence type="ECO:0000255" key="1">
    <source>
        <dbReference type="HAMAP-Rule" id="MF_01938"/>
    </source>
</evidence>
<evidence type="ECO:0000269" key="2">
    <source>
    </source>
</evidence>
<evidence type="ECO:0000303" key="3">
    <source>
    </source>
</evidence>
<evidence type="ECO:0000305" key="4"/>
<evidence type="ECO:0000305" key="5">
    <source>
    </source>
</evidence>
<dbReference type="EC" id="2.5.1.130" evidence="1 5"/>
<dbReference type="EMBL" id="BA000022">
    <property type="protein sequence ID" value="BAA18030.1"/>
    <property type="molecule type" value="Genomic_DNA"/>
</dbReference>
<dbReference type="PIR" id="S75469">
    <property type="entry name" value="S75469"/>
</dbReference>
<dbReference type="SMR" id="P73962"/>
<dbReference type="FunCoup" id="P73962">
    <property type="interactions" value="387"/>
</dbReference>
<dbReference type="IntAct" id="P73962">
    <property type="interactions" value="4"/>
</dbReference>
<dbReference type="STRING" id="1148.gene:10498900"/>
<dbReference type="PaxDb" id="1148-1653114"/>
<dbReference type="EnsemblBacteria" id="BAA18030">
    <property type="protein sequence ID" value="BAA18030"/>
    <property type="gene ID" value="BAA18030"/>
</dbReference>
<dbReference type="KEGG" id="syn:slr1518"/>
<dbReference type="eggNOG" id="COG1575">
    <property type="taxonomic scope" value="Bacteria"/>
</dbReference>
<dbReference type="InParanoid" id="P73962"/>
<dbReference type="PhylomeDB" id="P73962"/>
<dbReference type="BioCyc" id="MetaCyc:MONOMER-13822"/>
<dbReference type="UniPathway" id="UPA00995"/>
<dbReference type="Proteomes" id="UP000001425">
    <property type="component" value="Chromosome"/>
</dbReference>
<dbReference type="GO" id="GO:0005886">
    <property type="term" value="C:plasma membrane"/>
    <property type="evidence" value="ECO:0007669"/>
    <property type="project" value="UniProtKB-SubCell"/>
</dbReference>
<dbReference type="GO" id="GO:0004659">
    <property type="term" value="F:prenyltransferase activity"/>
    <property type="evidence" value="ECO:0000318"/>
    <property type="project" value="GO_Central"/>
</dbReference>
<dbReference type="GO" id="GO:0009234">
    <property type="term" value="P:menaquinone biosynthetic process"/>
    <property type="evidence" value="ECO:0000318"/>
    <property type="project" value="GO_Central"/>
</dbReference>
<dbReference type="GO" id="GO:0042372">
    <property type="term" value="P:phylloquinone biosynthetic process"/>
    <property type="evidence" value="ECO:0007669"/>
    <property type="project" value="UniProtKB-UniRule"/>
</dbReference>
<dbReference type="GO" id="GO:0042371">
    <property type="term" value="P:vitamin K biosynthetic process"/>
    <property type="evidence" value="ECO:0000318"/>
    <property type="project" value="GO_Central"/>
</dbReference>
<dbReference type="CDD" id="cd13962">
    <property type="entry name" value="PT_UbiA_UBIAD1"/>
    <property type="match status" value="1"/>
</dbReference>
<dbReference type="HAMAP" id="MF_01938">
    <property type="entry name" value="MenA_2"/>
    <property type="match status" value="1"/>
</dbReference>
<dbReference type="InterPro" id="IPR011937">
    <property type="entry name" value="DHNA_phytyltransferase_MenA"/>
</dbReference>
<dbReference type="InterPro" id="IPR000537">
    <property type="entry name" value="UbiA_prenyltransferase"/>
</dbReference>
<dbReference type="InterPro" id="IPR026046">
    <property type="entry name" value="UBIAD1"/>
</dbReference>
<dbReference type="NCBIfam" id="TIGR02235">
    <property type="entry name" value="menA_cyano-plnt"/>
    <property type="match status" value="1"/>
</dbReference>
<dbReference type="PANTHER" id="PTHR13929">
    <property type="entry name" value="1,4-DIHYDROXY-2-NAPHTHOATE OCTAPRENYLTRANSFERASE"/>
    <property type="match status" value="1"/>
</dbReference>
<dbReference type="PANTHER" id="PTHR13929:SF0">
    <property type="entry name" value="UBIA PRENYLTRANSFERASE DOMAIN-CONTAINING PROTEIN 1"/>
    <property type="match status" value="1"/>
</dbReference>
<dbReference type="Pfam" id="PF01040">
    <property type="entry name" value="UbiA"/>
    <property type="match status" value="1"/>
</dbReference>
<dbReference type="PIRSF" id="PIRSF005355">
    <property type="entry name" value="UBIAD1"/>
    <property type="match status" value="1"/>
</dbReference>
<keyword id="KW-0997">Cell inner membrane</keyword>
<keyword id="KW-1003">Cell membrane</keyword>
<keyword id="KW-0472">Membrane</keyword>
<keyword id="KW-1185">Reference proteome</keyword>
<keyword id="KW-0808">Transferase</keyword>
<keyword id="KW-0812">Transmembrane</keyword>
<keyword id="KW-1133">Transmembrane helix</keyword>
<feature type="chain" id="PRO_0000096419" description="2-carboxy-1,4-naphthoquinone phytyltransferase">
    <location>
        <begin position="1"/>
        <end position="307"/>
    </location>
</feature>
<feature type="transmembrane region" description="Helical" evidence="1">
    <location>
        <begin position="27"/>
        <end position="47"/>
    </location>
</feature>
<feature type="transmembrane region" description="Helical" evidence="1">
    <location>
        <begin position="51"/>
        <end position="71"/>
    </location>
</feature>
<feature type="transmembrane region" description="Helical" evidence="1">
    <location>
        <begin position="98"/>
        <end position="118"/>
    </location>
</feature>
<feature type="transmembrane region" description="Helical" evidence="1">
    <location>
        <begin position="125"/>
        <end position="145"/>
    </location>
</feature>
<feature type="transmembrane region" description="Helical" evidence="1">
    <location>
        <begin position="147"/>
        <end position="167"/>
    </location>
</feature>
<feature type="transmembrane region" description="Helical" evidence="1">
    <location>
        <begin position="177"/>
        <end position="197"/>
    </location>
</feature>
<feature type="transmembrane region" description="Helical" evidence="1">
    <location>
        <begin position="223"/>
        <end position="243"/>
    </location>
</feature>
<feature type="transmembrane region" description="Helical" evidence="1">
    <location>
        <begin position="284"/>
        <end position="304"/>
    </location>
</feature>
<gene>
    <name evidence="1" type="primary">menA</name>
    <name type="ordered locus">slr1518</name>
</gene>
<reference key="1">
    <citation type="journal article" date="1996" name="DNA Res.">
        <title>Sequence analysis of the genome of the unicellular cyanobacterium Synechocystis sp. strain PCC6803. II. Sequence determination of the entire genome and assignment of potential protein-coding regions.</title>
        <authorList>
            <person name="Kaneko T."/>
            <person name="Sato S."/>
            <person name="Kotani H."/>
            <person name="Tanaka A."/>
            <person name="Asamizu E."/>
            <person name="Nakamura Y."/>
            <person name="Miyajima N."/>
            <person name="Hirosawa M."/>
            <person name="Sugiura M."/>
            <person name="Sasamoto S."/>
            <person name="Kimura T."/>
            <person name="Hosouchi T."/>
            <person name="Matsuno A."/>
            <person name="Muraki A."/>
            <person name="Nakazaki N."/>
            <person name="Naruo K."/>
            <person name="Okumura S."/>
            <person name="Shimpo S."/>
            <person name="Takeuchi C."/>
            <person name="Wada T."/>
            <person name="Watanabe A."/>
            <person name="Yamada M."/>
            <person name="Yasuda M."/>
            <person name="Tabata S."/>
        </authorList>
    </citation>
    <scope>NUCLEOTIDE SEQUENCE [LARGE SCALE GENOMIC DNA]</scope>
    <source>
        <strain>ATCC 27184 / PCC 6803 / Kazusa</strain>
    </source>
</reference>
<reference key="2">
    <citation type="journal article" date="2000" name="J. Biol. Chem.">
        <title>Recruitment of a foreign quinone into the A(1) site of photosystem I. I. Genetic and physiological characterization of phylloquinone biosynthetic pathway mutants in Synechocystis sp. pcc 6803.</title>
        <authorList>
            <person name="Johnson T.W."/>
            <person name="Shen G."/>
            <person name="Zybailov B."/>
            <person name="Kolling D."/>
            <person name="Reategui R."/>
            <person name="Beauparlant S."/>
            <person name="Vassiliev I.R."/>
            <person name="Bryant D.A."/>
            <person name="Jones A.D."/>
            <person name="Golbeck J.H."/>
            <person name="Chitnis P.R."/>
        </authorList>
    </citation>
    <scope>FUNCTION</scope>
    <scope>PATHWAY</scope>
    <scope>DISRUPTION PHENOTYPE</scope>
    <source>
        <strain>ATCC 27184 / PCC 6803 / Kazusa</strain>
    </source>
</reference>
<protein>
    <recommendedName>
        <fullName evidence="1">2-carboxy-1,4-naphthoquinone phytyltransferase</fullName>
        <ecNumber evidence="1 5">2.5.1.130</ecNumber>
    </recommendedName>
    <alternativeName>
        <fullName evidence="1 3">1,4-dihydroxy-2-naphthoate phytyltransferase</fullName>
        <shortName evidence="1 3">DHNA phytyltransferase</shortName>
    </alternativeName>
</protein>